<evidence type="ECO:0000255" key="1">
    <source>
        <dbReference type="HAMAP-Rule" id="MF_00049"/>
    </source>
</evidence>
<protein>
    <recommendedName>
        <fullName evidence="1">Leucine--tRNA ligase</fullName>
        <ecNumber evidence="1">6.1.1.4</ecNumber>
    </recommendedName>
    <alternativeName>
        <fullName evidence="1">Leucyl-tRNA synthetase</fullName>
        <shortName evidence="1">LeuRS</shortName>
    </alternativeName>
</protein>
<comment type="catalytic activity">
    <reaction evidence="1">
        <text>tRNA(Leu) + L-leucine + ATP = L-leucyl-tRNA(Leu) + AMP + diphosphate</text>
        <dbReference type="Rhea" id="RHEA:11688"/>
        <dbReference type="Rhea" id="RHEA-COMP:9613"/>
        <dbReference type="Rhea" id="RHEA-COMP:9622"/>
        <dbReference type="ChEBI" id="CHEBI:30616"/>
        <dbReference type="ChEBI" id="CHEBI:33019"/>
        <dbReference type="ChEBI" id="CHEBI:57427"/>
        <dbReference type="ChEBI" id="CHEBI:78442"/>
        <dbReference type="ChEBI" id="CHEBI:78494"/>
        <dbReference type="ChEBI" id="CHEBI:456215"/>
        <dbReference type="EC" id="6.1.1.4"/>
    </reaction>
</comment>
<comment type="subcellular location">
    <subcellularLocation>
        <location evidence="1">Cytoplasm</location>
    </subcellularLocation>
</comment>
<comment type="similarity">
    <text evidence="1">Belongs to the class-I aminoacyl-tRNA synthetase family.</text>
</comment>
<sequence>MRYDFSTIEKKWQSFWLKNNSFSSGESTDKPKYYVLDMFPYPSGSGLHVGHLEGYTATDIVARYKRSCGYNVLHPMGWDAFGLPAEQFAIKTGTHPKNTTEKNISSFRETLQAMGFSYDWSREINTTSPDYFRWTQWIFIKLYELGLAYVSEVDINWCEELKTVLANEEVEEKVKEGYTVIRKPLRQWVLKITAYAERLLDDLDELDWPENVKQMQRNWIGRSEGMEIDFELRCHNRKLRVYTTRPDTLFGATFLVISPEHPLALKLATAQQLVAVTQYIKEAKLKSELERTGLQKDKTGIFTGSFAINPATGDPLPVWISDFVLTSYGTGAIMSVPAHDSRDWEFAKKFGLPIIEVIKSPDGVDDAAFEGKESVSINSSNPEISIDGLHFSEAFQIMAHWLETKGLGERKVTYKLRDWIFSRQRYWGEPIPVKHYEDGSIRTESNLPLQLPEVEAYQPSETGESPLATMHDWLYGADEFGSFRRETNTMPQWAGSCWYYLRFIDPENNAQLIDPAKEKYWMNVDLYIGGAEHAVLHLLYARFWHKVLYDLGVVSSREPFKKLFNQGMILGEDNEKMSKSRGNVIPADQVLKDYGADAVRLYEMFLGPLEQVKPWNTNGIEGISRFLGKVWRLVYPDSENPDQRDQAAVLDENPLPEILQRRMHKTIKKVTEDTDHLKFNTAISEMMVFVNELQKNGCRQKSAVENLLLMLAPYAPHITAELWQAIGHTSPISAEPFPVFDPAIAEDPVVTIAVQVNGKLRGRFTAPAKSPEESLVDMAKHVDTVIKFLEGQTIVKEIVIQDKLVNFAVKQSIPNH</sequence>
<keyword id="KW-0030">Aminoacyl-tRNA synthetase</keyword>
<keyword id="KW-0067">ATP-binding</keyword>
<keyword id="KW-0963">Cytoplasm</keyword>
<keyword id="KW-0436">Ligase</keyword>
<keyword id="KW-0547">Nucleotide-binding</keyword>
<keyword id="KW-0648">Protein biosynthesis</keyword>
<keyword id="KW-1185">Reference proteome</keyword>
<name>SYL_CHLPD</name>
<reference key="1">
    <citation type="submission" date="2006-12" db="EMBL/GenBank/DDBJ databases">
        <title>Complete sequence of Chlorobium phaeobacteroides DSM 266.</title>
        <authorList>
            <consortium name="US DOE Joint Genome Institute"/>
            <person name="Copeland A."/>
            <person name="Lucas S."/>
            <person name="Lapidus A."/>
            <person name="Barry K."/>
            <person name="Detter J.C."/>
            <person name="Glavina del Rio T."/>
            <person name="Hammon N."/>
            <person name="Israni S."/>
            <person name="Pitluck S."/>
            <person name="Goltsman E."/>
            <person name="Schmutz J."/>
            <person name="Larimer F."/>
            <person name="Land M."/>
            <person name="Hauser L."/>
            <person name="Mikhailova N."/>
            <person name="Li T."/>
            <person name="Overmann J."/>
            <person name="Bryant D.A."/>
            <person name="Richardson P."/>
        </authorList>
    </citation>
    <scope>NUCLEOTIDE SEQUENCE [LARGE SCALE GENOMIC DNA]</scope>
    <source>
        <strain>DSM 266 / SMG 266 / 2430</strain>
    </source>
</reference>
<organism>
    <name type="scientific">Chlorobium phaeobacteroides (strain DSM 266 / SMG 266 / 2430)</name>
    <dbReference type="NCBI Taxonomy" id="290317"/>
    <lineage>
        <taxon>Bacteria</taxon>
        <taxon>Pseudomonadati</taxon>
        <taxon>Chlorobiota</taxon>
        <taxon>Chlorobiia</taxon>
        <taxon>Chlorobiales</taxon>
        <taxon>Chlorobiaceae</taxon>
        <taxon>Chlorobium/Pelodictyon group</taxon>
        <taxon>Chlorobium</taxon>
    </lineage>
</organism>
<accession>A1BDY0</accession>
<dbReference type="EC" id="6.1.1.4" evidence="1"/>
<dbReference type="EMBL" id="CP000492">
    <property type="protein sequence ID" value="ABL64607.1"/>
    <property type="molecule type" value="Genomic_DNA"/>
</dbReference>
<dbReference type="RefSeq" id="WP_011744440.1">
    <property type="nucleotide sequence ID" value="NC_008639.1"/>
</dbReference>
<dbReference type="SMR" id="A1BDY0"/>
<dbReference type="STRING" id="290317.Cpha266_0551"/>
<dbReference type="KEGG" id="cph:Cpha266_0551"/>
<dbReference type="eggNOG" id="COG0495">
    <property type="taxonomic scope" value="Bacteria"/>
</dbReference>
<dbReference type="HOGENOM" id="CLU_004427_0_0_10"/>
<dbReference type="OrthoDB" id="9810365at2"/>
<dbReference type="Proteomes" id="UP000008701">
    <property type="component" value="Chromosome"/>
</dbReference>
<dbReference type="GO" id="GO:0005829">
    <property type="term" value="C:cytosol"/>
    <property type="evidence" value="ECO:0007669"/>
    <property type="project" value="TreeGrafter"/>
</dbReference>
<dbReference type="GO" id="GO:0002161">
    <property type="term" value="F:aminoacyl-tRNA deacylase activity"/>
    <property type="evidence" value="ECO:0007669"/>
    <property type="project" value="InterPro"/>
</dbReference>
<dbReference type="GO" id="GO:0005524">
    <property type="term" value="F:ATP binding"/>
    <property type="evidence" value="ECO:0007669"/>
    <property type="project" value="UniProtKB-UniRule"/>
</dbReference>
<dbReference type="GO" id="GO:0004823">
    <property type="term" value="F:leucine-tRNA ligase activity"/>
    <property type="evidence" value="ECO:0007669"/>
    <property type="project" value="UniProtKB-UniRule"/>
</dbReference>
<dbReference type="GO" id="GO:0006429">
    <property type="term" value="P:leucyl-tRNA aminoacylation"/>
    <property type="evidence" value="ECO:0007669"/>
    <property type="project" value="UniProtKB-UniRule"/>
</dbReference>
<dbReference type="CDD" id="cd07958">
    <property type="entry name" value="Anticodon_Ia_Leu_BEm"/>
    <property type="match status" value="1"/>
</dbReference>
<dbReference type="CDD" id="cd00812">
    <property type="entry name" value="LeuRS_core"/>
    <property type="match status" value="1"/>
</dbReference>
<dbReference type="FunFam" id="3.40.50.620:FF:000056">
    <property type="entry name" value="Leucine--tRNA ligase"/>
    <property type="match status" value="1"/>
</dbReference>
<dbReference type="FunFam" id="3.40.50.620:FF:000077">
    <property type="entry name" value="Leucine--tRNA ligase"/>
    <property type="match status" value="1"/>
</dbReference>
<dbReference type="FunFam" id="1.10.730.10:FF:000011">
    <property type="entry name" value="Leucine--tRNA ligase chloroplastic/mitochondrial"/>
    <property type="match status" value="1"/>
</dbReference>
<dbReference type="Gene3D" id="3.10.20.590">
    <property type="match status" value="1"/>
</dbReference>
<dbReference type="Gene3D" id="3.40.50.620">
    <property type="entry name" value="HUPs"/>
    <property type="match status" value="2"/>
</dbReference>
<dbReference type="Gene3D" id="1.10.730.10">
    <property type="entry name" value="Isoleucyl-tRNA Synthetase, Domain 1"/>
    <property type="match status" value="1"/>
</dbReference>
<dbReference type="Gene3D" id="3.90.740.10">
    <property type="entry name" value="Valyl/Leucyl/Isoleucyl-tRNA synthetase, editing domain"/>
    <property type="match status" value="1"/>
</dbReference>
<dbReference type="HAMAP" id="MF_00049_B">
    <property type="entry name" value="Leu_tRNA_synth_B"/>
    <property type="match status" value="1"/>
</dbReference>
<dbReference type="InterPro" id="IPR002300">
    <property type="entry name" value="aa-tRNA-synth_Ia"/>
</dbReference>
<dbReference type="InterPro" id="IPR002302">
    <property type="entry name" value="Leu-tRNA-ligase"/>
</dbReference>
<dbReference type="InterPro" id="IPR025709">
    <property type="entry name" value="Leu_tRNA-synth_edit"/>
</dbReference>
<dbReference type="InterPro" id="IPR013155">
    <property type="entry name" value="M/V/L/I-tRNA-synth_anticd-bd"/>
</dbReference>
<dbReference type="InterPro" id="IPR015413">
    <property type="entry name" value="Methionyl/Leucyl_tRNA_Synth"/>
</dbReference>
<dbReference type="InterPro" id="IPR014729">
    <property type="entry name" value="Rossmann-like_a/b/a_fold"/>
</dbReference>
<dbReference type="InterPro" id="IPR009080">
    <property type="entry name" value="tRNAsynth_Ia_anticodon-bd"/>
</dbReference>
<dbReference type="InterPro" id="IPR009008">
    <property type="entry name" value="Val/Leu/Ile-tRNA-synth_edit"/>
</dbReference>
<dbReference type="NCBIfam" id="TIGR00396">
    <property type="entry name" value="leuS_bact"/>
    <property type="match status" value="1"/>
</dbReference>
<dbReference type="PANTHER" id="PTHR43740:SF2">
    <property type="entry name" value="LEUCINE--TRNA LIGASE, MITOCHONDRIAL"/>
    <property type="match status" value="1"/>
</dbReference>
<dbReference type="PANTHER" id="PTHR43740">
    <property type="entry name" value="LEUCYL-TRNA SYNTHETASE"/>
    <property type="match status" value="1"/>
</dbReference>
<dbReference type="Pfam" id="PF08264">
    <property type="entry name" value="Anticodon_1"/>
    <property type="match status" value="1"/>
</dbReference>
<dbReference type="Pfam" id="PF00133">
    <property type="entry name" value="tRNA-synt_1"/>
    <property type="match status" value="1"/>
</dbReference>
<dbReference type="Pfam" id="PF13603">
    <property type="entry name" value="tRNA-synt_1_2"/>
    <property type="match status" value="1"/>
</dbReference>
<dbReference type="Pfam" id="PF09334">
    <property type="entry name" value="tRNA-synt_1g"/>
    <property type="match status" value="1"/>
</dbReference>
<dbReference type="PRINTS" id="PR00985">
    <property type="entry name" value="TRNASYNTHLEU"/>
</dbReference>
<dbReference type="SUPFAM" id="SSF47323">
    <property type="entry name" value="Anticodon-binding domain of a subclass of class I aminoacyl-tRNA synthetases"/>
    <property type="match status" value="1"/>
</dbReference>
<dbReference type="SUPFAM" id="SSF52374">
    <property type="entry name" value="Nucleotidylyl transferase"/>
    <property type="match status" value="1"/>
</dbReference>
<dbReference type="SUPFAM" id="SSF50677">
    <property type="entry name" value="ValRS/IleRS/LeuRS editing domain"/>
    <property type="match status" value="1"/>
</dbReference>
<gene>
    <name evidence="1" type="primary">leuS</name>
    <name type="ordered locus">Cpha266_0551</name>
</gene>
<proteinExistence type="inferred from homology"/>
<feature type="chain" id="PRO_1000009322" description="Leucine--tRNA ligase">
    <location>
        <begin position="1"/>
        <end position="816"/>
    </location>
</feature>
<feature type="short sequence motif" description="'HIGH' region">
    <location>
        <begin position="40"/>
        <end position="51"/>
    </location>
</feature>
<feature type="short sequence motif" description="'KMSKS' region">
    <location>
        <begin position="576"/>
        <end position="580"/>
    </location>
</feature>
<feature type="binding site" evidence="1">
    <location>
        <position position="579"/>
    </location>
    <ligand>
        <name>ATP</name>
        <dbReference type="ChEBI" id="CHEBI:30616"/>
    </ligand>
</feature>